<comment type="subunit">
    <text evidence="1">Part of the 30S ribosomal subunit.</text>
</comment>
<comment type="similarity">
    <text evidence="1">Belongs to the eukaryotic ribosomal protein eS8 family.</text>
</comment>
<accession>Q8TS82</accession>
<evidence type="ECO:0000255" key="1">
    <source>
        <dbReference type="HAMAP-Rule" id="MF_00029"/>
    </source>
</evidence>
<evidence type="ECO:0000305" key="2"/>
<proteinExistence type="inferred from homology"/>
<reference key="1">
    <citation type="journal article" date="2002" name="Genome Res.">
        <title>The genome of Methanosarcina acetivorans reveals extensive metabolic and physiological diversity.</title>
        <authorList>
            <person name="Galagan J.E."/>
            <person name="Nusbaum C."/>
            <person name="Roy A."/>
            <person name="Endrizzi M.G."/>
            <person name="Macdonald P."/>
            <person name="FitzHugh W."/>
            <person name="Calvo S."/>
            <person name="Engels R."/>
            <person name="Smirnov S."/>
            <person name="Atnoor D."/>
            <person name="Brown A."/>
            <person name="Allen N."/>
            <person name="Naylor J."/>
            <person name="Stange-Thomann N."/>
            <person name="DeArellano K."/>
            <person name="Johnson R."/>
            <person name="Linton L."/>
            <person name="McEwan P."/>
            <person name="McKernan K."/>
            <person name="Talamas J."/>
            <person name="Tirrell A."/>
            <person name="Ye W."/>
            <person name="Zimmer A."/>
            <person name="Barber R.D."/>
            <person name="Cann I."/>
            <person name="Graham D.E."/>
            <person name="Grahame D.A."/>
            <person name="Guss A.M."/>
            <person name="Hedderich R."/>
            <person name="Ingram-Smith C."/>
            <person name="Kuettner H.C."/>
            <person name="Krzycki J.A."/>
            <person name="Leigh J.A."/>
            <person name="Li W."/>
            <person name="Liu J."/>
            <person name="Mukhopadhyay B."/>
            <person name="Reeve J.N."/>
            <person name="Smith K."/>
            <person name="Springer T.A."/>
            <person name="Umayam L.A."/>
            <person name="White O."/>
            <person name="White R.H."/>
            <person name="de Macario E.C."/>
            <person name="Ferry J.G."/>
            <person name="Jarrell K.F."/>
            <person name="Jing H."/>
            <person name="Macario A.J.L."/>
            <person name="Paulsen I.T."/>
            <person name="Pritchett M."/>
            <person name="Sowers K.R."/>
            <person name="Swanson R.V."/>
            <person name="Zinder S.H."/>
            <person name="Lander E."/>
            <person name="Metcalf W.W."/>
            <person name="Birren B."/>
        </authorList>
    </citation>
    <scope>NUCLEOTIDE SEQUENCE [LARGE SCALE GENOMIC DNA]</scope>
    <source>
        <strain>ATCC 35395 / DSM 2834 / JCM 12185 / C2A</strain>
    </source>
</reference>
<keyword id="KW-1185">Reference proteome</keyword>
<keyword id="KW-0687">Ribonucleoprotein</keyword>
<keyword id="KW-0689">Ribosomal protein</keyword>
<name>RS8E_METAC</name>
<sequence>MRWQGSSRRKATGGKVITARGKRKFEMGRESAETRISEIKRKKVPTMGGNRKVRLLQSNVANVTNPKDGKTVTAPIETVIDNTANKHYVRRNILTKGSVIRTSMGTARVTSRPGQDGVVNAVLIE</sequence>
<feature type="chain" id="PRO_0000122266" description="Small ribosomal subunit protein eS8">
    <location>
        <begin position="1"/>
        <end position="125"/>
    </location>
</feature>
<dbReference type="EMBL" id="AE010299">
    <property type="protein sequence ID" value="AAM04356.1"/>
    <property type="molecule type" value="Genomic_DNA"/>
</dbReference>
<dbReference type="RefSeq" id="WP_011020961.1">
    <property type="nucleotide sequence ID" value="NC_003552.1"/>
</dbReference>
<dbReference type="SMR" id="Q8TS82"/>
<dbReference type="FunCoup" id="Q8TS82">
    <property type="interactions" value="126"/>
</dbReference>
<dbReference type="STRING" id="188937.MA_0923"/>
<dbReference type="EnsemblBacteria" id="AAM04356">
    <property type="protein sequence ID" value="AAM04356"/>
    <property type="gene ID" value="MA_0923"/>
</dbReference>
<dbReference type="GeneID" id="1472813"/>
<dbReference type="KEGG" id="mac:MA_0923"/>
<dbReference type="HOGENOM" id="CLU_080597_2_1_2"/>
<dbReference type="InParanoid" id="Q8TS82"/>
<dbReference type="OrthoDB" id="372305at2157"/>
<dbReference type="PhylomeDB" id="Q8TS82"/>
<dbReference type="Proteomes" id="UP000002487">
    <property type="component" value="Chromosome"/>
</dbReference>
<dbReference type="GO" id="GO:0022627">
    <property type="term" value="C:cytosolic small ribosomal subunit"/>
    <property type="evidence" value="ECO:0000318"/>
    <property type="project" value="GO_Central"/>
</dbReference>
<dbReference type="GO" id="GO:0003735">
    <property type="term" value="F:structural constituent of ribosome"/>
    <property type="evidence" value="ECO:0000318"/>
    <property type="project" value="GO_Central"/>
</dbReference>
<dbReference type="GO" id="GO:0000462">
    <property type="term" value="P:maturation of SSU-rRNA from tricistronic rRNA transcript (SSU-rRNA, 5.8S rRNA, LSU-rRNA)"/>
    <property type="evidence" value="ECO:0000318"/>
    <property type="project" value="GO_Central"/>
</dbReference>
<dbReference type="GO" id="GO:0006412">
    <property type="term" value="P:translation"/>
    <property type="evidence" value="ECO:0007669"/>
    <property type="project" value="UniProtKB-UniRule"/>
</dbReference>
<dbReference type="CDD" id="cd11382">
    <property type="entry name" value="Ribosomal_S8e"/>
    <property type="match status" value="1"/>
</dbReference>
<dbReference type="FunFam" id="2.40.10.310:FF:000002">
    <property type="entry name" value="30S ribosomal protein S8e"/>
    <property type="match status" value="1"/>
</dbReference>
<dbReference type="Gene3D" id="2.40.10.310">
    <property type="match status" value="1"/>
</dbReference>
<dbReference type="HAMAP" id="MF_00029">
    <property type="entry name" value="Ribosomal_eS8"/>
    <property type="match status" value="1"/>
</dbReference>
<dbReference type="InterPro" id="IPR001047">
    <property type="entry name" value="Ribosomal_eS8"/>
</dbReference>
<dbReference type="InterPro" id="IPR018283">
    <property type="entry name" value="Ribosomal_eS8_CS"/>
</dbReference>
<dbReference type="InterPro" id="IPR020919">
    <property type="entry name" value="Ribosomal_protein_eS8_arc"/>
</dbReference>
<dbReference type="InterPro" id="IPR022309">
    <property type="entry name" value="Ribosomal_Se8/biogenesis_NSA2"/>
</dbReference>
<dbReference type="NCBIfam" id="TIGR00307">
    <property type="entry name" value="eS8"/>
    <property type="match status" value="1"/>
</dbReference>
<dbReference type="PANTHER" id="PTHR10394">
    <property type="entry name" value="40S RIBOSOMAL PROTEIN S8"/>
    <property type="match status" value="1"/>
</dbReference>
<dbReference type="Pfam" id="PF01201">
    <property type="entry name" value="Ribosomal_S8e"/>
    <property type="match status" value="1"/>
</dbReference>
<dbReference type="PROSITE" id="PS01193">
    <property type="entry name" value="RIBOSOMAL_S8E"/>
    <property type="match status" value="1"/>
</dbReference>
<organism>
    <name type="scientific">Methanosarcina acetivorans (strain ATCC 35395 / DSM 2834 / JCM 12185 / C2A)</name>
    <dbReference type="NCBI Taxonomy" id="188937"/>
    <lineage>
        <taxon>Archaea</taxon>
        <taxon>Methanobacteriati</taxon>
        <taxon>Methanobacteriota</taxon>
        <taxon>Stenosarchaea group</taxon>
        <taxon>Methanomicrobia</taxon>
        <taxon>Methanosarcinales</taxon>
        <taxon>Methanosarcinaceae</taxon>
        <taxon>Methanosarcina</taxon>
    </lineage>
</organism>
<gene>
    <name evidence="1" type="primary">rps8e</name>
    <name type="ordered locus">MA_0923</name>
</gene>
<protein>
    <recommendedName>
        <fullName evidence="1">Small ribosomal subunit protein eS8</fullName>
    </recommendedName>
    <alternativeName>
        <fullName evidence="2">30S ribosomal protein S8e</fullName>
    </alternativeName>
</protein>